<keyword id="KW-0472">Membrane</keyword>
<keyword id="KW-0520">NAD</keyword>
<keyword id="KW-0521">NADP</keyword>
<keyword id="KW-0618">Plastoquinone</keyword>
<keyword id="KW-0874">Quinone</keyword>
<keyword id="KW-1185">Reference proteome</keyword>
<keyword id="KW-0793">Thylakoid</keyword>
<keyword id="KW-1278">Translocase</keyword>
<keyword id="KW-0812">Transmembrane</keyword>
<keyword id="KW-1133">Transmembrane helix</keyword>
<dbReference type="EC" id="7.1.1.-" evidence="1"/>
<dbReference type="EMBL" id="CP000951">
    <property type="protein sequence ID" value="ACB00305.1"/>
    <property type="molecule type" value="Genomic_DNA"/>
</dbReference>
<dbReference type="RefSeq" id="WP_012307923.1">
    <property type="nucleotide sequence ID" value="NZ_JAHHPU010000006.1"/>
</dbReference>
<dbReference type="SMR" id="B1XJL9"/>
<dbReference type="STRING" id="32049.SYNPCC7002_A2327"/>
<dbReference type="KEGG" id="syp:SYNPCC7002_A2327"/>
<dbReference type="eggNOG" id="COG1008">
    <property type="taxonomic scope" value="Bacteria"/>
</dbReference>
<dbReference type="HOGENOM" id="CLU_007100_4_2_3"/>
<dbReference type="Proteomes" id="UP000001688">
    <property type="component" value="Chromosome"/>
</dbReference>
<dbReference type="GO" id="GO:0031676">
    <property type="term" value="C:plasma membrane-derived thylakoid membrane"/>
    <property type="evidence" value="ECO:0007669"/>
    <property type="project" value="UniProtKB-SubCell"/>
</dbReference>
<dbReference type="GO" id="GO:0008137">
    <property type="term" value="F:NADH dehydrogenase (ubiquinone) activity"/>
    <property type="evidence" value="ECO:0007669"/>
    <property type="project" value="InterPro"/>
</dbReference>
<dbReference type="GO" id="GO:0048039">
    <property type="term" value="F:ubiquinone binding"/>
    <property type="evidence" value="ECO:0007669"/>
    <property type="project" value="TreeGrafter"/>
</dbReference>
<dbReference type="GO" id="GO:0042773">
    <property type="term" value="P:ATP synthesis coupled electron transport"/>
    <property type="evidence" value="ECO:0007669"/>
    <property type="project" value="InterPro"/>
</dbReference>
<dbReference type="GO" id="GO:0015990">
    <property type="term" value="P:electron transport coupled proton transport"/>
    <property type="evidence" value="ECO:0007669"/>
    <property type="project" value="TreeGrafter"/>
</dbReference>
<dbReference type="HAMAP" id="MF_00491">
    <property type="entry name" value="NDH1_NuoM"/>
    <property type="match status" value="1"/>
</dbReference>
<dbReference type="InterPro" id="IPR022997">
    <property type="entry name" value="NADH_Q_OxRdtase_chain4"/>
</dbReference>
<dbReference type="InterPro" id="IPR010227">
    <property type="entry name" value="NADH_Q_OxRdtase_chainM/4"/>
</dbReference>
<dbReference type="InterPro" id="IPR003918">
    <property type="entry name" value="NADH_UbQ_OxRdtase"/>
</dbReference>
<dbReference type="InterPro" id="IPR001750">
    <property type="entry name" value="ND/Mrp_TM"/>
</dbReference>
<dbReference type="NCBIfam" id="TIGR01972">
    <property type="entry name" value="NDH_I_M"/>
    <property type="match status" value="1"/>
</dbReference>
<dbReference type="NCBIfam" id="NF009212">
    <property type="entry name" value="PRK12561.1"/>
    <property type="match status" value="1"/>
</dbReference>
<dbReference type="PANTHER" id="PTHR43507:SF21">
    <property type="entry name" value="NAD(P)H-QUINONE OXIDOREDUCTASE CHAIN 4, CHLOROPLASTIC"/>
    <property type="match status" value="1"/>
</dbReference>
<dbReference type="PANTHER" id="PTHR43507">
    <property type="entry name" value="NADH-UBIQUINONE OXIDOREDUCTASE CHAIN 4"/>
    <property type="match status" value="1"/>
</dbReference>
<dbReference type="Pfam" id="PF00361">
    <property type="entry name" value="Proton_antipo_M"/>
    <property type="match status" value="1"/>
</dbReference>
<dbReference type="PRINTS" id="PR01437">
    <property type="entry name" value="NUOXDRDTASE4"/>
</dbReference>
<comment type="function">
    <text evidence="1">NDH-1 shuttles electrons from NAD(P)H, via FMN and iron-sulfur (Fe-S) centers, to quinones in the respiratory chain. The immediate electron acceptor for the enzyme in this species is believed to be plastoquinone. Couples the redox reaction to proton translocation (for every two electrons transferred, four hydrogen ions are translocated across the cytoplasmic membrane), and thus conserves the redox energy in a proton gradient.</text>
</comment>
<comment type="catalytic activity">
    <reaction evidence="1">
        <text>a plastoquinone + NADH + (n+1) H(+)(in) = a plastoquinol + NAD(+) + n H(+)(out)</text>
        <dbReference type="Rhea" id="RHEA:42608"/>
        <dbReference type="Rhea" id="RHEA-COMP:9561"/>
        <dbReference type="Rhea" id="RHEA-COMP:9562"/>
        <dbReference type="ChEBI" id="CHEBI:15378"/>
        <dbReference type="ChEBI" id="CHEBI:17757"/>
        <dbReference type="ChEBI" id="CHEBI:57540"/>
        <dbReference type="ChEBI" id="CHEBI:57945"/>
        <dbReference type="ChEBI" id="CHEBI:62192"/>
    </reaction>
</comment>
<comment type="catalytic activity">
    <reaction evidence="1">
        <text>a plastoquinone + NADPH + (n+1) H(+)(in) = a plastoquinol + NADP(+) + n H(+)(out)</text>
        <dbReference type="Rhea" id="RHEA:42612"/>
        <dbReference type="Rhea" id="RHEA-COMP:9561"/>
        <dbReference type="Rhea" id="RHEA-COMP:9562"/>
        <dbReference type="ChEBI" id="CHEBI:15378"/>
        <dbReference type="ChEBI" id="CHEBI:17757"/>
        <dbReference type="ChEBI" id="CHEBI:57783"/>
        <dbReference type="ChEBI" id="CHEBI:58349"/>
        <dbReference type="ChEBI" id="CHEBI:62192"/>
    </reaction>
</comment>
<comment type="subcellular location">
    <subcellularLocation>
        <location evidence="1">Cellular thylakoid membrane</location>
        <topology evidence="1">Multi-pass membrane protein</topology>
    </subcellularLocation>
</comment>
<comment type="similarity">
    <text evidence="1">Belongs to the complex I subunit 4 family.</text>
</comment>
<evidence type="ECO:0000255" key="1">
    <source>
        <dbReference type="HAMAP-Rule" id="MF_00491"/>
    </source>
</evidence>
<gene>
    <name evidence="1" type="primary">ndhD3</name>
    <name type="ordered locus">SYNPCC7002_A2327</name>
</gene>
<feature type="chain" id="PRO_0000343251" description="NAD(P)H-quinone oxidoreductase chain 4 3">
    <location>
        <begin position="1"/>
        <end position="550"/>
    </location>
</feature>
<feature type="transmembrane region" description="Helical" evidence="1">
    <location>
        <begin position="5"/>
        <end position="25"/>
    </location>
</feature>
<feature type="transmembrane region" description="Helical" evidence="1">
    <location>
        <begin position="36"/>
        <end position="56"/>
    </location>
</feature>
<feature type="transmembrane region" description="Helical" evidence="1">
    <location>
        <begin position="86"/>
        <end position="106"/>
    </location>
</feature>
<feature type="transmembrane region" description="Helical" evidence="1">
    <location>
        <begin position="114"/>
        <end position="134"/>
    </location>
</feature>
<feature type="transmembrane region" description="Helical" evidence="1">
    <location>
        <begin position="135"/>
        <end position="155"/>
    </location>
</feature>
<feature type="transmembrane region" description="Helical" evidence="1">
    <location>
        <begin position="168"/>
        <end position="188"/>
    </location>
</feature>
<feature type="transmembrane region" description="Helical" evidence="1">
    <location>
        <begin position="212"/>
        <end position="232"/>
    </location>
</feature>
<feature type="transmembrane region" description="Helical" evidence="1">
    <location>
        <begin position="243"/>
        <end position="263"/>
    </location>
</feature>
<feature type="transmembrane region" description="Helical" evidence="1">
    <location>
        <begin position="277"/>
        <end position="297"/>
    </location>
</feature>
<feature type="transmembrane region" description="Helical" evidence="1">
    <location>
        <begin position="311"/>
        <end position="331"/>
    </location>
</feature>
<feature type="transmembrane region" description="Helical" evidence="1">
    <location>
        <begin position="332"/>
        <end position="352"/>
    </location>
</feature>
<feature type="transmembrane region" description="Helical" evidence="1">
    <location>
        <begin position="375"/>
        <end position="395"/>
    </location>
</feature>
<feature type="transmembrane region" description="Helical" evidence="1">
    <location>
        <begin position="418"/>
        <end position="438"/>
    </location>
</feature>
<feature type="transmembrane region" description="Helical" evidence="1">
    <location>
        <begin position="489"/>
        <end position="509"/>
    </location>
</feature>
<organism>
    <name type="scientific">Picosynechococcus sp. (strain ATCC 27264 / PCC 7002 / PR-6)</name>
    <name type="common">Agmenellum quadruplicatum</name>
    <dbReference type="NCBI Taxonomy" id="32049"/>
    <lineage>
        <taxon>Bacteria</taxon>
        <taxon>Bacillati</taxon>
        <taxon>Cyanobacteriota</taxon>
        <taxon>Cyanophyceae</taxon>
        <taxon>Oscillatoriophycideae</taxon>
        <taxon>Chroococcales</taxon>
        <taxon>Geminocystaceae</taxon>
        <taxon>Picosynechococcus</taxon>
    </lineage>
</organism>
<sequence length="550" mass="60064">MAPDFPWLTAIIALPALSTLLIPLLPDKEGKTVRWYALIVGLVDFALMCFAFWQHFDPQATEFQLAESYRWLPSLGIQWSVAVDGISAPLVLLAGFVTTLAMFSAWQVNQRPRLFYALMLLLYSAQIGVFVAKDLFLFFLMWEIELIPVYLLVCIWGGKRRRYAAMKFLLYTAAASIFILVAALALSLNLPGGPNFDLGAIAQQDYPLGLQMWLYAGLLVSFGVKLAIFPLHTWLPDAHGEASSPVSMLLAGVLLKMGGYGLMRFNMELLPDAHVRFAPLLVILGVVNIVYGAFSSFGQTNMKRRLAYSSVSHMGFVLIGIASFTDLGINGAMLQMLSHGLIASVLFFLAGVTYDRTKTMVLAEVGGLGQVMPKVFAMFTVGALASLALPGMSGFVGELSVFVGLASSDTYSATFRTITVFLAAVGVILTPIYLLSMLREMFYTREMDLSCDLGQPTNVAIAGNAPVCFGNDCVLPSNAIYEDARPREIFIATCFTVLIIGVGLYPKLLMQMYDAKTQTLNTSVRQAQAIAKQPSEPIAALQAPELTMPH</sequence>
<protein>
    <recommendedName>
        <fullName evidence="1">NAD(P)H-quinone oxidoreductase chain 4 3</fullName>
        <ecNumber evidence="1">7.1.1.-</ecNumber>
    </recommendedName>
    <alternativeName>
        <fullName evidence="1">NAD(P)H dehydrogenase I, chain 4 3</fullName>
    </alternativeName>
    <alternativeName>
        <fullName evidence="1">NDH-1, chain 4 3</fullName>
    </alternativeName>
</protein>
<accession>B1XJL9</accession>
<reference key="1">
    <citation type="submission" date="2008-02" db="EMBL/GenBank/DDBJ databases">
        <title>Complete sequence of Synechococcus sp. PCC 7002.</title>
        <authorList>
            <person name="Li T."/>
            <person name="Zhao J."/>
            <person name="Zhao C."/>
            <person name="Liu Z."/>
            <person name="Zhao F."/>
            <person name="Marquardt J."/>
            <person name="Nomura C.T."/>
            <person name="Persson S."/>
            <person name="Detter J.C."/>
            <person name="Richardson P.M."/>
            <person name="Lanz C."/>
            <person name="Schuster S.C."/>
            <person name="Wang J."/>
            <person name="Li S."/>
            <person name="Huang X."/>
            <person name="Cai T."/>
            <person name="Yu Z."/>
            <person name="Luo J."/>
            <person name="Zhao J."/>
            <person name="Bryant D.A."/>
        </authorList>
    </citation>
    <scope>NUCLEOTIDE SEQUENCE [LARGE SCALE GENOMIC DNA]</scope>
    <source>
        <strain>ATCC 27264 / PCC 7002 / PR-6</strain>
    </source>
</reference>
<name>NU4C3_PICP2</name>
<proteinExistence type="inferred from homology"/>